<gene>
    <name evidence="11 13" type="primary">KHDC3L</name>
    <name evidence="10 13" type="synonym">C6orf221</name>
    <name evidence="9" type="synonym">ECAT1</name>
</gene>
<accession>Q587J8</accession>
<accession>B2RNW7</accession>
<protein>
    <recommendedName>
        <fullName>KH domain-containing protein 3</fullName>
    </recommendedName>
    <alternativeName>
        <fullName evidence="9">ES cell-associated transcript 1 protein</fullName>
    </alternativeName>
    <alternativeName>
        <fullName evidence="11">KHDC3-like protein</fullName>
    </alternativeName>
</protein>
<proteinExistence type="evidence at protein level"/>
<sequence>MDAPRRFPTLVQLMQPKAMPVEVLGHLPKRFSWFHSEFLKNPKVVRLEVWLVEKIFGRGGERIPHVQGMSQILIHVNRLDPNGEAEILVFGRPSYQEDTIKMIMNLADYHRQLQAKGSGKALAQDVATQKAETQRSSIEVREAGTQRSVEVREAGTQRSVEVQEVGTQGSPVEVQEAGTQQSLQAANKSGTQRSPEAASKAVTQRFREDARDPVTRL</sequence>
<keyword id="KW-0158">Chromosome</keyword>
<keyword id="KW-0963">Cytoplasm</keyword>
<keyword id="KW-0206">Cytoskeleton</keyword>
<keyword id="KW-0496">Mitochondrion</keyword>
<keyword id="KW-0539">Nucleus</keyword>
<keyword id="KW-0597">Phosphoprotein</keyword>
<keyword id="KW-1267">Proteomics identification</keyword>
<keyword id="KW-1185">Reference proteome</keyword>
<dbReference type="EMBL" id="AB211062">
    <property type="protein sequence ID" value="BAD95489.1"/>
    <property type="molecule type" value="mRNA"/>
</dbReference>
<dbReference type="EMBL" id="BC132844">
    <property type="protein sequence ID" value="AAI32845.1"/>
    <property type="molecule type" value="mRNA"/>
</dbReference>
<dbReference type="EMBL" id="BC137160">
    <property type="protein sequence ID" value="AAI37161.1"/>
    <property type="molecule type" value="mRNA"/>
</dbReference>
<dbReference type="CCDS" id="CCDS34484.1"/>
<dbReference type="RefSeq" id="NP_001017361.1">
    <property type="nucleotide sequence ID" value="NM_001017361.3"/>
</dbReference>
<dbReference type="SMR" id="Q587J8"/>
<dbReference type="BioGRID" id="127542">
    <property type="interactions" value="1"/>
</dbReference>
<dbReference type="ComplexPortal" id="CPX-2210">
    <property type="entry name" value="Subcortical maternal complex"/>
</dbReference>
<dbReference type="CORUM" id="Q587J8"/>
<dbReference type="FunCoup" id="Q587J8">
    <property type="interactions" value="4"/>
</dbReference>
<dbReference type="IntAct" id="Q587J8">
    <property type="interactions" value="5"/>
</dbReference>
<dbReference type="STRING" id="9606.ENSP00000359392"/>
<dbReference type="iPTMnet" id="Q587J8"/>
<dbReference type="PhosphoSitePlus" id="Q587J8"/>
<dbReference type="BioMuta" id="KHDC3L"/>
<dbReference type="DMDM" id="74721670"/>
<dbReference type="MassIVE" id="Q587J8"/>
<dbReference type="PaxDb" id="9606-ENSP00000359392"/>
<dbReference type="PeptideAtlas" id="Q587J8"/>
<dbReference type="Antibodypedia" id="49514">
    <property type="antibodies" value="82 antibodies from 16 providers"/>
</dbReference>
<dbReference type="DNASU" id="154288"/>
<dbReference type="Ensembl" id="ENST00000370367.4">
    <property type="protein sequence ID" value="ENSP00000359392.3"/>
    <property type="gene ID" value="ENSG00000203908.4"/>
</dbReference>
<dbReference type="GeneID" id="154288"/>
<dbReference type="KEGG" id="hsa:154288"/>
<dbReference type="MANE-Select" id="ENST00000370367.4">
    <property type="protein sequence ID" value="ENSP00000359392.3"/>
    <property type="RefSeq nucleotide sequence ID" value="NM_001017361.3"/>
    <property type="RefSeq protein sequence ID" value="NP_001017361.1"/>
</dbReference>
<dbReference type="UCSC" id="uc003pgt.5">
    <property type="organism name" value="human"/>
</dbReference>
<dbReference type="AGR" id="HGNC:33699"/>
<dbReference type="CTD" id="154288"/>
<dbReference type="DisGeNET" id="154288"/>
<dbReference type="GeneCards" id="KHDC3L"/>
<dbReference type="HGNC" id="HGNC:33699">
    <property type="gene designation" value="KHDC3L"/>
</dbReference>
<dbReference type="HPA" id="ENSG00000203908">
    <property type="expression patterns" value="Tissue enhanced (brain, testis)"/>
</dbReference>
<dbReference type="MalaCards" id="KHDC3L"/>
<dbReference type="MIM" id="611687">
    <property type="type" value="gene"/>
</dbReference>
<dbReference type="MIM" id="614293">
    <property type="type" value="phenotype"/>
</dbReference>
<dbReference type="neXtProt" id="NX_Q587J8"/>
<dbReference type="OpenTargets" id="ENSG00000203908"/>
<dbReference type="Orphanet" id="254688">
    <property type="disease" value="Complete hydatidiform mole"/>
</dbReference>
<dbReference type="Orphanet" id="254693">
    <property type="disease" value="Partial hydatidiform mole"/>
</dbReference>
<dbReference type="PharmGKB" id="PA162380388"/>
<dbReference type="VEuPathDB" id="HostDB:ENSG00000203908"/>
<dbReference type="eggNOG" id="ENOG502QQIF">
    <property type="taxonomic scope" value="Eukaryota"/>
</dbReference>
<dbReference type="GeneTree" id="ENSGT00940000162601"/>
<dbReference type="HOGENOM" id="CLU_115458_0_0_1"/>
<dbReference type="InParanoid" id="Q587J8"/>
<dbReference type="OMA" id="LSKRPYW"/>
<dbReference type="OrthoDB" id="9790568at2759"/>
<dbReference type="PAN-GO" id="Q587J8">
    <property type="GO annotations" value="2 GO annotations based on evolutionary models"/>
</dbReference>
<dbReference type="PhylomeDB" id="Q587J8"/>
<dbReference type="TreeFam" id="TF338690"/>
<dbReference type="PathwayCommons" id="Q587J8"/>
<dbReference type="SignaLink" id="Q587J8"/>
<dbReference type="SIGNOR" id="Q587J8"/>
<dbReference type="BioGRID-ORCS" id="154288">
    <property type="hits" value="7 hits in 1135 CRISPR screens"/>
</dbReference>
<dbReference type="GenomeRNAi" id="154288"/>
<dbReference type="Pharos" id="Q587J8">
    <property type="development level" value="Tbio"/>
</dbReference>
<dbReference type="PRO" id="PR:Q587J8"/>
<dbReference type="Proteomes" id="UP000005640">
    <property type="component" value="Chromosome 6"/>
</dbReference>
<dbReference type="RNAct" id="Q587J8">
    <property type="molecule type" value="protein"/>
</dbReference>
<dbReference type="Bgee" id="ENSG00000203908">
    <property type="expression patterns" value="Expressed in oocyte and 42 other cell types or tissues"/>
</dbReference>
<dbReference type="GO" id="GO:0005938">
    <property type="term" value="C:cell cortex"/>
    <property type="evidence" value="ECO:0000250"/>
    <property type="project" value="UniProtKB"/>
</dbReference>
<dbReference type="GO" id="GO:0005813">
    <property type="term" value="C:centrosome"/>
    <property type="evidence" value="ECO:0000250"/>
    <property type="project" value="UniProtKB"/>
</dbReference>
<dbReference type="GO" id="GO:0005694">
    <property type="term" value="C:chromosome"/>
    <property type="evidence" value="ECO:0007669"/>
    <property type="project" value="UniProtKB-SubCell"/>
</dbReference>
<dbReference type="GO" id="GO:0005737">
    <property type="term" value="C:cytoplasm"/>
    <property type="evidence" value="ECO:0000314"/>
    <property type="project" value="UniProtKB"/>
</dbReference>
<dbReference type="GO" id="GO:0140095">
    <property type="term" value="C:cytoplasmic lattice"/>
    <property type="evidence" value="ECO:0000250"/>
    <property type="project" value="UniProtKB"/>
</dbReference>
<dbReference type="GO" id="GO:0005739">
    <property type="term" value="C:mitochondrion"/>
    <property type="evidence" value="ECO:0000250"/>
    <property type="project" value="UniProtKB"/>
</dbReference>
<dbReference type="GO" id="GO:0005634">
    <property type="term" value="C:nucleus"/>
    <property type="evidence" value="ECO:0000314"/>
    <property type="project" value="UniProtKB"/>
</dbReference>
<dbReference type="GO" id="GO:0032991">
    <property type="term" value="C:protein-containing complex"/>
    <property type="evidence" value="ECO:0000314"/>
    <property type="project" value="UniProtKB"/>
</dbReference>
<dbReference type="GO" id="GO:0106333">
    <property type="term" value="C:subcortical maternal complex"/>
    <property type="evidence" value="ECO:0000314"/>
    <property type="project" value="UniProtKB"/>
</dbReference>
<dbReference type="GO" id="GO:0003723">
    <property type="term" value="F:RNA binding"/>
    <property type="evidence" value="ECO:0007669"/>
    <property type="project" value="InterPro"/>
</dbReference>
<dbReference type="GO" id="GO:0140094">
    <property type="term" value="F:structural constituent of cytoplasmic lattice"/>
    <property type="evidence" value="ECO:0000250"/>
    <property type="project" value="UniProtKB"/>
</dbReference>
<dbReference type="GO" id="GO:0007015">
    <property type="term" value="P:actin filament organization"/>
    <property type="evidence" value="ECO:0000250"/>
    <property type="project" value="UniProtKB"/>
</dbReference>
<dbReference type="GO" id="GO:0051656">
    <property type="term" value="P:establishment of organelle localization"/>
    <property type="evidence" value="ECO:0000250"/>
    <property type="project" value="UniProtKB"/>
</dbReference>
<dbReference type="GO" id="GO:0043066">
    <property type="term" value="P:negative regulation of apoptotic process"/>
    <property type="evidence" value="ECO:0000250"/>
    <property type="project" value="UniProtKB"/>
</dbReference>
<dbReference type="GO" id="GO:1900006">
    <property type="term" value="P:positive regulation of dendrite development"/>
    <property type="evidence" value="ECO:0000250"/>
    <property type="project" value="UniProtKB"/>
</dbReference>
<dbReference type="GO" id="GO:2000781">
    <property type="term" value="P:positive regulation of double-strand break repair"/>
    <property type="evidence" value="ECO:0000250"/>
    <property type="project" value="UniProtKB"/>
</dbReference>
<dbReference type="GO" id="GO:1905168">
    <property type="term" value="P:positive regulation of double-strand break repair via homologous recombination"/>
    <property type="evidence" value="ECO:0000315"/>
    <property type="project" value="UniProtKB"/>
</dbReference>
<dbReference type="GO" id="GO:0040019">
    <property type="term" value="P:positive regulation of embryonic development"/>
    <property type="evidence" value="ECO:0000250"/>
    <property type="project" value="UniProtKB"/>
</dbReference>
<dbReference type="GO" id="GO:0050769">
    <property type="term" value="P:positive regulation of neurogenesis"/>
    <property type="evidence" value="ECO:0000250"/>
    <property type="project" value="UniProtKB"/>
</dbReference>
<dbReference type="GO" id="GO:0140089">
    <property type="term" value="P:protein storage"/>
    <property type="evidence" value="ECO:0000250"/>
    <property type="project" value="UniProtKB"/>
</dbReference>
<dbReference type="GO" id="GO:0032880">
    <property type="term" value="P:regulation of protein localization"/>
    <property type="evidence" value="ECO:0000315"/>
    <property type="project" value="UniProtKB"/>
</dbReference>
<dbReference type="GO" id="GO:0031297">
    <property type="term" value="P:replication fork processing"/>
    <property type="evidence" value="ECO:0000250"/>
    <property type="project" value="UniProtKB"/>
</dbReference>
<dbReference type="CDD" id="cd12795">
    <property type="entry name" value="FILIA_N_like"/>
    <property type="match status" value="1"/>
</dbReference>
<dbReference type="FunFam" id="3.30.1370.10:FF:000087">
    <property type="entry name" value="KH domain containing 3 like, subcortical maternal complex member"/>
    <property type="match status" value="1"/>
</dbReference>
<dbReference type="Gene3D" id="3.30.1370.10">
    <property type="entry name" value="K Homology domain, type 1"/>
    <property type="match status" value="1"/>
</dbReference>
<dbReference type="InterPro" id="IPR036612">
    <property type="entry name" value="KH_dom_type_1_sf"/>
</dbReference>
<dbReference type="InterPro" id="IPR051778">
    <property type="entry name" value="KHDC1"/>
</dbReference>
<dbReference type="InterPro" id="IPR031952">
    <property type="entry name" value="MOEP19_KH-like"/>
</dbReference>
<dbReference type="PANTHER" id="PTHR19447:SF15">
    <property type="entry name" value="KH DOMAIN-CONTAINING PROTEIN 3"/>
    <property type="match status" value="1"/>
</dbReference>
<dbReference type="PANTHER" id="PTHR19447">
    <property type="entry name" value="OOCYTE-EXPRESSED PROTEIN HOMOLOG-RELATED"/>
    <property type="match status" value="1"/>
</dbReference>
<dbReference type="Pfam" id="PF16005">
    <property type="entry name" value="MOEP19"/>
    <property type="match status" value="1"/>
</dbReference>
<dbReference type="SUPFAM" id="SSF54791">
    <property type="entry name" value="Eukaryotic type KH-domain (KH-domain type I)"/>
    <property type="match status" value="1"/>
</dbReference>
<organism>
    <name type="scientific">Homo sapiens</name>
    <name type="common">Human</name>
    <dbReference type="NCBI Taxonomy" id="9606"/>
    <lineage>
        <taxon>Eukaryota</taxon>
        <taxon>Metazoa</taxon>
        <taxon>Chordata</taxon>
        <taxon>Craniata</taxon>
        <taxon>Vertebrata</taxon>
        <taxon>Euteleostomi</taxon>
        <taxon>Mammalia</taxon>
        <taxon>Eutheria</taxon>
        <taxon>Euarchontoglires</taxon>
        <taxon>Primates</taxon>
        <taxon>Haplorrhini</taxon>
        <taxon>Catarrhini</taxon>
        <taxon>Hominidae</taxon>
        <taxon>Homo</taxon>
    </lineage>
</organism>
<evidence type="ECO:0000250" key="1">
    <source>
        <dbReference type="UniProtKB" id="F6SZT2"/>
    </source>
</evidence>
<evidence type="ECO:0000250" key="2">
    <source>
        <dbReference type="UniProtKB" id="Q9CWU5"/>
    </source>
</evidence>
<evidence type="ECO:0000256" key="3">
    <source>
        <dbReference type="SAM" id="MobiDB-lite"/>
    </source>
</evidence>
<evidence type="ECO:0000269" key="4">
    <source>
    </source>
</evidence>
<evidence type="ECO:0000269" key="5">
    <source>
    </source>
</evidence>
<evidence type="ECO:0000269" key="6">
    <source>
    </source>
</evidence>
<evidence type="ECO:0000269" key="7">
    <source>
    </source>
</evidence>
<evidence type="ECO:0000269" key="8">
    <source>
    </source>
</evidence>
<evidence type="ECO:0000303" key="9">
    <source>
    </source>
</evidence>
<evidence type="ECO:0000303" key="10">
    <source>
    </source>
</evidence>
<evidence type="ECO:0000303" key="11">
    <source>
    </source>
</evidence>
<evidence type="ECO:0000305" key="12"/>
<evidence type="ECO:0000312" key="13">
    <source>
        <dbReference type="HGNC" id="HGNC:33699"/>
    </source>
</evidence>
<name>KHDC3_HUMAN</name>
<comment type="function">
    <text evidence="2 8">Component of the subcortical maternal complex (SCMC), a multiprotein complex that plays a key role in early embryonic development (By similarity). The SCMC complex is a structural constituent of cytoplasmic lattices, which consist in fibrous structures found in the cytoplasm of oocytes and preimplantation embryos (By similarity). They are required to store maternal proteins critical for embryonic development, such as proteins that control epigenetic reprogramming of the preimplantation embryo, and prevent their degradation or activation (By similarity). KHDC3 ensures proper spindle assembly by regulating the localization of AURKA via RHOA signaling and of PLK1 via a RHOA-independent process (By similarity). Required for the localization of MAD2L1 to kinetochores to enable spindle assembly checkpoint function (By similarity). As part of the OOEP-KHDC3 scaffold, recruits BLM and TRIM25 to DNA replication forks, thereby promoting the ubiquitination of BLM by TRIM25, enhancing BLM retainment at replication forks and therefore promoting stalled replication fork restart (By similarity). Regulates homologous recombination-mediated DNA repair via recruitment of RAD51 to sites of DNA double-strand breaks, and sustainment of PARP1 activity, which in turn modulates downstream ATM or ATR activation (PubMed:31609975). Activation of ATM or ATR in response to DNA double-strand breaks may be cell-type specific (By similarity). Its role in DNA double-strand break repair is independent of its role in restarting stalled replication forks (By similarity). Promotes neural stem cell neurogenesis and neuronal differentiation in the hippocampus (By similarity). May regulate normal development of learning, memory and anxiety (By similarity). Capable of binding RNA (By similarity).</text>
</comment>
<comment type="subunit">
    <text evidence="2 6 7 8">Component of the subcortical maternal complex (SCMC), at least composed of NLRP5, KHDC3L, OOEP, and TLE6 isoform 1 (PubMed:25542835). Within the complex, interacts with NLRP5, KHDC3L and TLE6 isoform 1 (PubMed:25542835, PubMed:26537248). The SCMC may facilitate translocation of its components between the nuclear and cytoplasmic compartments (PubMed:25542835). Forms a scaffold complex with OOEP/FLOPED, and interacts with BLM and TRIM25 at DNA replication forks (By similarity). Interacts with PARP1; the interaction is increased following the formation of DNA double-strand breaks (PubMed:31609975). Interacts with NUMA1 (By similarity).</text>
</comment>
<comment type="interaction">
    <interactant intactId="EBI-22731520">
        <id>Q587J8</id>
    </interactant>
    <interactant intactId="EBI-11071382">
        <id>P59047</id>
        <label>NLRP5</label>
    </interactant>
    <organismsDiffer>false</organismsDiffer>
    <experiments>2</experiments>
</comment>
<comment type="interaction">
    <interactant intactId="EBI-22731520">
        <id>Q587J8</id>
    </interactant>
    <interactant intactId="EBI-18583589">
        <id>A6NGQ2</id>
        <label>OOEP</label>
    </interactant>
    <organismsDiffer>false</organismsDiffer>
    <experiments>3</experiments>
</comment>
<comment type="interaction">
    <interactant intactId="EBI-22731520">
        <id>Q587J8</id>
    </interactant>
    <interactant intactId="EBI-742388">
        <id>Q9H8W4</id>
        <label>PLEKHF2</label>
    </interactant>
    <organismsDiffer>false</organismsDiffer>
    <experiments>3</experiments>
</comment>
<comment type="interaction">
    <interactant intactId="EBI-22731520">
        <id>Q587J8</id>
    </interactant>
    <interactant intactId="EBI-32711753">
        <id>Q9H808-1</id>
        <label>TLE6</label>
    </interactant>
    <organismsDiffer>false</organismsDiffer>
    <experiments>2</experiments>
</comment>
<comment type="subcellular location">
    <subcellularLocation>
        <location evidence="2">Cytoplasm</location>
    </subcellularLocation>
    <subcellularLocation>
        <location evidence="6">Cytoplasm</location>
        <location evidence="6">Cell cortex</location>
    </subcellularLocation>
    <subcellularLocation>
        <location evidence="6">Nucleus</location>
    </subcellularLocation>
    <subcellularLocation>
        <location evidence="2">Mitochondrion</location>
    </subcellularLocation>
    <subcellularLocation>
        <location evidence="2">Cytoplasm</location>
        <location evidence="2">Cytoskeleton</location>
        <location evidence="2">Microtubule organizing center</location>
        <location evidence="2">Centrosome</location>
    </subcellularLocation>
    <subcellularLocation>
        <location evidence="8">Chromosome</location>
    </subcellularLocation>
    <text evidence="2 8">Core component of cytoplasmic lattices in oocytes (By similarity). Expressed in the subcortex of oocytes (By similarity). Located throughout the cell cortex of ovulated eggs in a complex with NLRP5 (By similarity). After fertilization, restricted to the apical cortex and excluded from regions of cell-cell contact (By similarity). Localized to centrosomes during interphase and mitosis (By similarity). Localizes to sites of DNA double-strand break repair (PubMed:31609975).</text>
</comment>
<comment type="tissue specificity">
    <text evidence="4">Expression appears to be maximal in germinal vesicle oocytes, it tails off through metaphase II oocytes and is undetectable following the completion of the oocyte to embryo transition.</text>
</comment>
<comment type="developmental stage">
    <text evidence="6">Expressed in oocytes of the fetal ovary (PubMed:25542835). Expressed primarily with other SCMC components in the subcortex of oocytes and early embryos (PubMed:25542835). Expression is excluded from cell-cell contact regions after the 2-cell stage (PubMed:25542835).</text>
</comment>
<comment type="induction">
    <text evidence="8">Induced by hydroxyurea and etoposide.</text>
</comment>
<comment type="domain">
    <text>Contains an atypical KH domain with amino acid changes at critical sites, suggesting that it may not bind RNA.</text>
</comment>
<comment type="disease" evidence="4 5">
    <disease id="DI-03290">
        <name>Hydatidiform mole, recurrent, 2</name>
        <acronym>HYDM2</acronym>
        <description>A disorder characterized by excessive trophoblast development that produces a growing mass of tissue inside the uterus at the beginning of a pregnancy. It leads to abnormal pregnancies with no embryo, and cystic degeneration of the chorionic villi.</description>
        <dbReference type="MIM" id="614293"/>
    </disease>
    <text>The disease is caused by variants affecting the gene represented in this entry.</text>
</comment>
<comment type="similarity">
    <text evidence="12">Belongs to the KHDC1 family.</text>
</comment>
<comment type="caution">
    <text evidence="1 8">The role of human KHDC3L in the restart of replication forks is unclear as it has been shown to not be involved in the process (PubMed:31609975). However it has been shown that the KHDC3L ortholog in macaque is required for the process (By similarity).</text>
</comment>
<reference key="1">
    <citation type="journal article" date="2003" name="Cell">
        <title>The homeoprotein Nanog is required for maintenance of pluripotency in mouse epiblast and ES cells.</title>
        <authorList>
            <person name="Mitsui K."/>
            <person name="Tokuzawa Y."/>
            <person name="Itoh H."/>
            <person name="Segawa K."/>
            <person name="Murakami M."/>
            <person name="Takahashi K."/>
            <person name="Maruyama M."/>
            <person name="Maeda M."/>
            <person name="Yamanaka S."/>
        </authorList>
    </citation>
    <scope>NUCLEOTIDE SEQUENCE [MRNA]</scope>
    <source>
        <tissue>Embryonic stem cell</tissue>
    </source>
</reference>
<reference key="2">
    <citation type="journal article" date="2004" name="Genome Res.">
        <title>The status, quality, and expansion of the NIH full-length cDNA project: the Mammalian Gene Collection (MGC).</title>
        <authorList>
            <consortium name="The MGC Project Team"/>
        </authorList>
    </citation>
    <scope>NUCLEOTIDE SEQUENCE [LARGE SCALE MRNA]</scope>
    <source>
        <tissue>Testis</tissue>
    </source>
</reference>
<reference key="3">
    <citation type="journal article" date="2007" name="Genomics">
        <title>Atypical structure and phylogenomic evolution of the new eutherian oocyte- and embryo-expressed KHDC1/DPPA5/ECAT1/OOEP gene family.</title>
        <authorList>
            <person name="Pierre A."/>
            <person name="Gautier M."/>
            <person name="Callebaut I."/>
            <person name="Bontoux M."/>
            <person name="Jeanpierre E."/>
            <person name="Pontarotti P."/>
            <person name="Monget P."/>
        </authorList>
    </citation>
    <scope>IDENTIFICATION</scope>
</reference>
<reference key="4">
    <citation type="journal article" date="2011" name="Am. J. Hum. Genet.">
        <title>Mutations causing familial biparental hydatidiform mole implicate c6orf221 as a possible regulator of genomic imprinting in the human oocyte.</title>
        <authorList>
            <person name="Parry D.A."/>
            <person name="Logan C.V."/>
            <person name="Hayward B.E."/>
            <person name="Shires M."/>
            <person name="Landolsi H."/>
            <person name="Diggle C."/>
            <person name="Carr I."/>
            <person name="Rittore C."/>
            <person name="Touitou I."/>
            <person name="Philibert L."/>
            <person name="Fisher R.A."/>
            <person name="Fallahian M."/>
            <person name="Huntriss J.D."/>
            <person name="Picton H.M."/>
            <person name="Malik S."/>
            <person name="Taylor G.R."/>
            <person name="Johnson C.A."/>
            <person name="Bonthron D.T."/>
            <person name="Sheridan E.G."/>
        </authorList>
    </citation>
    <scope>TISSUE SPECIFICITY</scope>
    <scope>INVOLVEMENT IN HYDM2</scope>
</reference>
<reference key="5">
    <citation type="journal article" date="2015" name="Genome Biol.">
        <title>TLE6 mutation causes the earliest known human embryonic lethality.</title>
        <authorList>
            <person name="Alazami A.M."/>
            <person name="Awad S.M."/>
            <person name="Coskun S."/>
            <person name="Al-Hassan S."/>
            <person name="Hijazi H."/>
            <person name="Abdulwahab F.M."/>
            <person name="Poizat C."/>
            <person name="Alkuraya F.S."/>
        </authorList>
    </citation>
    <scope>INTERACTION WITH TLE6</scope>
</reference>
<reference key="6">
    <citation type="journal article" date="2015" name="Mol. Hum. Reprod.">
        <title>Identification of a human subcortical maternal complex.</title>
        <authorList>
            <person name="Zhu K."/>
            <person name="Yan L."/>
            <person name="Zhang X."/>
            <person name="Lu X."/>
            <person name="Wang T."/>
            <person name="Yan J."/>
            <person name="Liu X."/>
            <person name="Qiao J."/>
            <person name="Li L."/>
        </authorList>
    </citation>
    <scope>IDENTIFICATION IN THE SCMC COMPLEX WITH NLRP5; OOEP AND TLE6 ISOFORM 1</scope>
    <scope>SUBCELLULAR LOCATION</scope>
    <scope>DEVELOPMENTAL STAGE</scope>
</reference>
<reference key="7">
    <citation type="journal article" date="2019" name="PLoS Biol.">
        <title>KHDC3L mutation causes recurrent pregnancy loss by inducing genomic instability of human early embryonic cells.</title>
        <authorList>
            <person name="Zhang W."/>
            <person name="Chen Z."/>
            <person name="Zhang D."/>
            <person name="Zhao B."/>
            <person name="Liu L."/>
            <person name="Xie Z."/>
            <person name="Yao Y."/>
            <person name="Zheng P."/>
        </authorList>
    </citation>
    <scope>FUNCTION</scope>
    <scope>INTERACTION WITH PARP1</scope>
    <scope>SUBCELLULAR LOCATION</scope>
    <scope>INDUCTION</scope>
    <scope>PHOSPHORYLATION AT THR-145 AND THR-156</scope>
    <scope>MUTAGENESIS OF THR-145; 150-GLU--SER-159; 150-GLU--VAL-172 AND THR-156</scope>
</reference>
<reference key="8">
    <citation type="journal article" date="2013" name="Mol. Hum. Reprod.">
        <title>NLRP7 or KHDC3L genes and the etiology of molar pregnancies and recurrent miscarriage.</title>
        <authorList>
            <person name="Andreasen L."/>
            <person name="Christiansen O.B."/>
            <person name="Niemann I."/>
            <person name="Bolund L."/>
            <person name="Sunde L."/>
        </authorList>
    </citation>
    <scope>VARIANTS HYDM2 LYS-5; GLN-97 AND GLY-201</scope>
</reference>
<feature type="chain" id="PRO_0000311967" description="KH domain-containing protein 3">
    <location>
        <begin position="1"/>
        <end position="217"/>
    </location>
</feature>
<feature type="domain" description="KH; atypical">
    <location>
        <begin position="40"/>
        <end position="103"/>
    </location>
</feature>
<feature type="region of interest" description="Involved in RNA binding" evidence="2">
    <location>
        <begin position="1"/>
        <end position="40"/>
    </location>
</feature>
<feature type="region of interest" description="Disordered" evidence="3">
    <location>
        <begin position="129"/>
        <end position="217"/>
    </location>
</feature>
<feature type="compositionally biased region" description="Basic and acidic residues" evidence="3">
    <location>
        <begin position="138"/>
        <end position="155"/>
    </location>
</feature>
<feature type="compositionally biased region" description="Polar residues" evidence="3">
    <location>
        <begin position="156"/>
        <end position="170"/>
    </location>
</feature>
<feature type="compositionally biased region" description="Polar residues" evidence="3">
    <location>
        <begin position="177"/>
        <end position="194"/>
    </location>
</feature>
<feature type="compositionally biased region" description="Basic and acidic residues" evidence="3">
    <location>
        <begin position="205"/>
        <end position="217"/>
    </location>
</feature>
<feature type="modified residue" description="Phosphothreonine; by ATM" evidence="8">
    <location>
        <position position="145"/>
    </location>
</feature>
<feature type="modified residue" description="Phosphothreonine; by ATM" evidence="8">
    <location>
        <position position="156"/>
    </location>
</feature>
<feature type="modified residue" description="Phosphoserine" evidence="2">
    <location>
        <position position="182"/>
    </location>
</feature>
<feature type="sequence variant" id="VAR_085059" description="In HYDM2; uncertain significance; dbSNP:rs144291287." evidence="5">
    <original>R</original>
    <variation>K</variation>
    <location>
        <position position="5"/>
    </location>
</feature>
<feature type="sequence variant" id="VAR_054052" description="In HYDM2; uncertain significance; dbSNP:rs564533." evidence="5">
    <original>E</original>
    <variation>Q</variation>
    <location>
        <position position="97"/>
    </location>
</feature>
<feature type="sequence variant" id="VAR_054053" description="In HYDM2; uncertain significance; dbSNP:rs561930." evidence="5">
    <original>A</original>
    <variation>G</variation>
    <location>
        <position position="201"/>
    </location>
</feature>
<feature type="mutagenesis site" description="Decreases recruitment of RAD51 to DNA double-strand breaks, PARP1 activity and ATM-CHK2 signaling resulting in a decrease in DNA double-strand break repair." evidence="8">
    <original>T</original>
    <variation>A</variation>
    <location>
        <position position="145"/>
    </location>
</feature>
<feature type="mutagenesis site" description="Abolishes DNA double-strand break repair. Reduces the localization of the homologous recombination DNA repair pathway protein RAD51 to sites of DNA double-strand breaks. May exhibit a dominant negative effect on PARP1 activation, homologous recombination repair and ATM-CHK2 signaling. No effect on restart of stalled replication forks, nascent DNA stability, localization to DNA double-strand break repair sites or interaction with PARP1." evidence="8">
    <location>
        <begin position="150"/>
        <end position="172"/>
    </location>
</feature>
<feature type="mutagenesis site" description="Abolishes DNA double-strand break repair. Reduces the localization of the homologous recombination DNA repair pathway protein RAD51 to sites of DNA double-strand breaks. May exhibit a dominant negative effect on PARP1 activation, homologous recombination repair and ATM-CHK2 signaling. No effect on restart of stalled replication forks, nascent DNA stability, localization to DNA double-strand break repair sites or interaction with PARP1." evidence="8">
    <location>
        <begin position="150"/>
        <end position="159"/>
    </location>
</feature>
<feature type="mutagenesis site" description="Decreases recruitment of RAD51 to DNA double-strand breaks, PARP1 activity and ATM-CHK2 signaling resulting in a decrease in DNA double-strand break repair." evidence="8">
    <original>T</original>
    <variation>A</variation>
    <location>
        <position position="156"/>
    </location>
</feature>
<feature type="mutagenesis site" description="No effect on recruitment of RAD51 to DNA double-strand breaks, PARP1 activity, ATM-CHK2 signaling or DNA double-strand break repair." evidence="8">
    <original>T</original>
    <variation>D</variation>
    <location>
        <position position="156"/>
    </location>
</feature>